<proteinExistence type="inferred from homology"/>
<comment type="function">
    <text evidence="1">Together with its co-chaperonin GroES, plays an essential role in assisting protein folding. The GroEL-GroES system forms a nano-cage that allows encapsulation of the non-native substrate proteins and provides a physical environment optimized to promote and accelerate protein folding.</text>
</comment>
<comment type="catalytic activity">
    <reaction evidence="1">
        <text>ATP + H2O + a folded polypeptide = ADP + phosphate + an unfolded polypeptide.</text>
        <dbReference type="EC" id="5.6.1.7"/>
    </reaction>
</comment>
<comment type="subunit">
    <text evidence="1">Forms a cylinder of 14 subunits composed of two heptameric rings stacked back-to-back. Interacts with the co-chaperonin GroES.</text>
</comment>
<comment type="subcellular location">
    <subcellularLocation>
        <location evidence="1">Cytoplasm</location>
    </subcellularLocation>
</comment>
<comment type="similarity">
    <text evidence="1">Belongs to the chaperonin (HSP60) family.</text>
</comment>
<keyword id="KW-0067">ATP-binding</keyword>
<keyword id="KW-0143">Chaperone</keyword>
<keyword id="KW-0963">Cytoplasm</keyword>
<keyword id="KW-0413">Isomerase</keyword>
<keyword id="KW-0547">Nucleotide-binding</keyword>
<keyword id="KW-1185">Reference proteome</keyword>
<dbReference type="EC" id="5.6.1.7" evidence="1"/>
<dbReference type="EMBL" id="AE017226">
    <property type="protein sequence ID" value="AAS11694.1"/>
    <property type="molecule type" value="Genomic_DNA"/>
</dbReference>
<dbReference type="RefSeq" id="NP_971783.1">
    <property type="nucleotide sequence ID" value="NC_002967.9"/>
</dbReference>
<dbReference type="RefSeq" id="WP_002670719.1">
    <property type="nucleotide sequence ID" value="NC_002967.9"/>
</dbReference>
<dbReference type="SMR" id="Q73NH7"/>
<dbReference type="STRING" id="243275.TDE_1175"/>
<dbReference type="PaxDb" id="243275-TDE_1175"/>
<dbReference type="GeneID" id="2740072"/>
<dbReference type="KEGG" id="tde:TDE_1175"/>
<dbReference type="PATRIC" id="fig|243275.7.peg.1133"/>
<dbReference type="eggNOG" id="COG0459">
    <property type="taxonomic scope" value="Bacteria"/>
</dbReference>
<dbReference type="HOGENOM" id="CLU_016503_3_0_12"/>
<dbReference type="OrthoDB" id="9766614at2"/>
<dbReference type="Proteomes" id="UP000008212">
    <property type="component" value="Chromosome"/>
</dbReference>
<dbReference type="GO" id="GO:0005737">
    <property type="term" value="C:cytoplasm"/>
    <property type="evidence" value="ECO:0007669"/>
    <property type="project" value="UniProtKB-SubCell"/>
</dbReference>
<dbReference type="GO" id="GO:0005524">
    <property type="term" value="F:ATP binding"/>
    <property type="evidence" value="ECO:0007669"/>
    <property type="project" value="UniProtKB-UniRule"/>
</dbReference>
<dbReference type="GO" id="GO:0140662">
    <property type="term" value="F:ATP-dependent protein folding chaperone"/>
    <property type="evidence" value="ECO:0007669"/>
    <property type="project" value="InterPro"/>
</dbReference>
<dbReference type="GO" id="GO:0016853">
    <property type="term" value="F:isomerase activity"/>
    <property type="evidence" value="ECO:0007669"/>
    <property type="project" value="UniProtKB-KW"/>
</dbReference>
<dbReference type="GO" id="GO:0051082">
    <property type="term" value="F:unfolded protein binding"/>
    <property type="evidence" value="ECO:0007669"/>
    <property type="project" value="UniProtKB-UniRule"/>
</dbReference>
<dbReference type="GO" id="GO:0042026">
    <property type="term" value="P:protein refolding"/>
    <property type="evidence" value="ECO:0007669"/>
    <property type="project" value="UniProtKB-UniRule"/>
</dbReference>
<dbReference type="CDD" id="cd03344">
    <property type="entry name" value="GroEL"/>
    <property type="match status" value="1"/>
</dbReference>
<dbReference type="FunFam" id="3.50.7.10:FF:000001">
    <property type="entry name" value="60 kDa chaperonin"/>
    <property type="match status" value="1"/>
</dbReference>
<dbReference type="Gene3D" id="3.50.7.10">
    <property type="entry name" value="GroEL"/>
    <property type="match status" value="1"/>
</dbReference>
<dbReference type="Gene3D" id="1.10.560.10">
    <property type="entry name" value="GroEL-like equatorial domain"/>
    <property type="match status" value="1"/>
</dbReference>
<dbReference type="Gene3D" id="3.30.260.10">
    <property type="entry name" value="TCP-1-like chaperonin intermediate domain"/>
    <property type="match status" value="1"/>
</dbReference>
<dbReference type="HAMAP" id="MF_00600">
    <property type="entry name" value="CH60"/>
    <property type="match status" value="1"/>
</dbReference>
<dbReference type="InterPro" id="IPR018370">
    <property type="entry name" value="Chaperonin_Cpn60_CS"/>
</dbReference>
<dbReference type="InterPro" id="IPR001844">
    <property type="entry name" value="Cpn60/GroEL"/>
</dbReference>
<dbReference type="InterPro" id="IPR002423">
    <property type="entry name" value="Cpn60/GroEL/TCP-1"/>
</dbReference>
<dbReference type="InterPro" id="IPR027409">
    <property type="entry name" value="GroEL-like_apical_dom_sf"/>
</dbReference>
<dbReference type="InterPro" id="IPR027413">
    <property type="entry name" value="GROEL-like_equatorial_sf"/>
</dbReference>
<dbReference type="InterPro" id="IPR027410">
    <property type="entry name" value="TCP-1-like_intermed_sf"/>
</dbReference>
<dbReference type="NCBIfam" id="TIGR02348">
    <property type="entry name" value="GroEL"/>
    <property type="match status" value="1"/>
</dbReference>
<dbReference type="NCBIfam" id="NF000592">
    <property type="entry name" value="PRK00013.1"/>
    <property type="match status" value="1"/>
</dbReference>
<dbReference type="NCBIfam" id="NF009487">
    <property type="entry name" value="PRK12849.1"/>
    <property type="match status" value="1"/>
</dbReference>
<dbReference type="NCBIfam" id="NF009488">
    <property type="entry name" value="PRK12850.1"/>
    <property type="match status" value="1"/>
</dbReference>
<dbReference type="NCBIfam" id="NF009489">
    <property type="entry name" value="PRK12851.1"/>
    <property type="match status" value="1"/>
</dbReference>
<dbReference type="PANTHER" id="PTHR45633">
    <property type="entry name" value="60 KDA HEAT SHOCK PROTEIN, MITOCHONDRIAL"/>
    <property type="match status" value="1"/>
</dbReference>
<dbReference type="Pfam" id="PF00118">
    <property type="entry name" value="Cpn60_TCP1"/>
    <property type="match status" value="1"/>
</dbReference>
<dbReference type="PRINTS" id="PR00298">
    <property type="entry name" value="CHAPERONIN60"/>
</dbReference>
<dbReference type="SUPFAM" id="SSF52029">
    <property type="entry name" value="GroEL apical domain-like"/>
    <property type="match status" value="1"/>
</dbReference>
<dbReference type="SUPFAM" id="SSF48592">
    <property type="entry name" value="GroEL equatorial domain-like"/>
    <property type="match status" value="1"/>
</dbReference>
<dbReference type="SUPFAM" id="SSF54849">
    <property type="entry name" value="GroEL-intermediate domain like"/>
    <property type="match status" value="1"/>
</dbReference>
<dbReference type="PROSITE" id="PS00296">
    <property type="entry name" value="CHAPERONINS_CPN60"/>
    <property type="match status" value="1"/>
</dbReference>
<protein>
    <recommendedName>
        <fullName evidence="1">Chaperonin GroEL</fullName>
        <ecNumber evidence="1">5.6.1.7</ecNumber>
    </recommendedName>
    <alternativeName>
        <fullName evidence="1">60 kDa chaperonin</fullName>
    </alternativeName>
    <alternativeName>
        <fullName evidence="1">Chaperonin-60</fullName>
        <shortName evidence="1">Cpn60</shortName>
    </alternativeName>
</protein>
<organism>
    <name type="scientific">Treponema denticola (strain ATCC 35405 / DSM 14222 / CIP 103919 / JCM 8153 / KCTC 15104)</name>
    <dbReference type="NCBI Taxonomy" id="243275"/>
    <lineage>
        <taxon>Bacteria</taxon>
        <taxon>Pseudomonadati</taxon>
        <taxon>Spirochaetota</taxon>
        <taxon>Spirochaetia</taxon>
        <taxon>Spirochaetales</taxon>
        <taxon>Treponemataceae</taxon>
        <taxon>Treponema</taxon>
    </lineage>
</organism>
<reference key="1">
    <citation type="journal article" date="2004" name="Proc. Natl. Acad. Sci. U.S.A.">
        <title>Comparison of the genome of the oral pathogen Treponema denticola with other spirochete genomes.</title>
        <authorList>
            <person name="Seshadri R."/>
            <person name="Myers G.S.A."/>
            <person name="Tettelin H."/>
            <person name="Eisen J.A."/>
            <person name="Heidelberg J.F."/>
            <person name="Dodson R.J."/>
            <person name="Davidsen T.M."/>
            <person name="DeBoy R.T."/>
            <person name="Fouts D.E."/>
            <person name="Haft D.H."/>
            <person name="Selengut J."/>
            <person name="Ren Q."/>
            <person name="Brinkac L.M."/>
            <person name="Madupu R."/>
            <person name="Kolonay J.F."/>
            <person name="Durkin S.A."/>
            <person name="Daugherty S.C."/>
            <person name="Shetty J."/>
            <person name="Shvartsbeyn A."/>
            <person name="Gebregeorgis E."/>
            <person name="Geer K."/>
            <person name="Tsegaye G."/>
            <person name="Malek J.A."/>
            <person name="Ayodeji B."/>
            <person name="Shatsman S."/>
            <person name="McLeod M.P."/>
            <person name="Smajs D."/>
            <person name="Howell J.K."/>
            <person name="Pal S."/>
            <person name="Amin A."/>
            <person name="Vashisth P."/>
            <person name="McNeill T.Z."/>
            <person name="Xiang Q."/>
            <person name="Sodergren E."/>
            <person name="Baca E."/>
            <person name="Weinstock G.M."/>
            <person name="Norris S.J."/>
            <person name="Fraser C.M."/>
            <person name="Paulsen I.T."/>
        </authorList>
    </citation>
    <scope>NUCLEOTIDE SEQUENCE [LARGE SCALE GENOMIC DNA]</scope>
    <source>
        <strain>ATCC 35405 / DSM 14222 / CIP 103919 / JCM 8153 / KCTC 15104</strain>
    </source>
</reference>
<evidence type="ECO:0000255" key="1">
    <source>
        <dbReference type="HAMAP-Rule" id="MF_00600"/>
    </source>
</evidence>
<gene>
    <name evidence="1" type="primary">groEL</name>
    <name evidence="1" type="synonym">groL</name>
    <name type="ordered locus">TDE_1175</name>
</gene>
<sequence>MAKQLLFNEEARKSLLAGVEQISNAVKVTLGPKGRNVLIDKSFGAPTVTKDGVSVAREVELENKFENMGAQLLKEVATKTNDVAGDGTTTATVLAYSMVKEGLKAVAAGMTPLELKRGIDKAVAIAVEDIQKNSKEIKGSEEVAHVASVSANNDAEIGKIIADAIAKVGKDGVIDVGEAQTMETVTDYVEGMQFDRGYISSYFVTDRDRMETVFENPYILIYDKSISTMKDLLPLLEQVAQSGRPLLIIAEDVEGEALATLVVNSLRGALKTCAVKAPGFGDRRKEMLEDIAVLTGGQVVSEELGFKLEAAQISMLGQAKSIKIDKDNTMIIDGAGKSKDIKDRVTQIKAQLDATDSEYDSEKLRERLAKLSGGVAVIKIGAVTEVEMKEKKHRVEDALSATRAAIEEGIVAGGGLAMIQAIAALEKADMSSLTEDEKVGFKIVKRALEEPIRQIAENAGLDGAVIAEKAKEKKGVGFDAAKMEWTDMVKAGIIDPAKVTRSALQNAASIASLLLTTECAITDIPEKQAGPAMPSPDMGGMGMY</sequence>
<accession>Q73NH7</accession>
<feature type="chain" id="PRO_0000063586" description="Chaperonin GroEL">
    <location>
        <begin position="1"/>
        <end position="544"/>
    </location>
</feature>
<feature type="binding site" evidence="1">
    <location>
        <begin position="29"/>
        <end position="32"/>
    </location>
    <ligand>
        <name>ATP</name>
        <dbReference type="ChEBI" id="CHEBI:30616"/>
    </ligand>
</feature>
<feature type="binding site" evidence="1">
    <location>
        <position position="50"/>
    </location>
    <ligand>
        <name>ATP</name>
        <dbReference type="ChEBI" id="CHEBI:30616"/>
    </ligand>
</feature>
<feature type="binding site" evidence="1">
    <location>
        <begin position="86"/>
        <end position="90"/>
    </location>
    <ligand>
        <name>ATP</name>
        <dbReference type="ChEBI" id="CHEBI:30616"/>
    </ligand>
</feature>
<feature type="binding site" evidence="1">
    <location>
        <position position="414"/>
    </location>
    <ligand>
        <name>ATP</name>
        <dbReference type="ChEBI" id="CHEBI:30616"/>
    </ligand>
</feature>
<feature type="binding site" evidence="1">
    <location>
        <begin position="479"/>
        <end position="481"/>
    </location>
    <ligand>
        <name>ATP</name>
        <dbReference type="ChEBI" id="CHEBI:30616"/>
    </ligand>
</feature>
<feature type="binding site" evidence="1">
    <location>
        <position position="495"/>
    </location>
    <ligand>
        <name>ATP</name>
        <dbReference type="ChEBI" id="CHEBI:30616"/>
    </ligand>
</feature>
<name>CH60_TREDE</name>